<organism>
    <name type="scientific">Pseudomonas aeruginosa (strain ATCC 15692 / DSM 22644 / CIP 104116 / JCM 14847 / LMG 12228 / 1C / PRS 101 / PAO1)</name>
    <dbReference type="NCBI Taxonomy" id="208964"/>
    <lineage>
        <taxon>Bacteria</taxon>
        <taxon>Pseudomonadati</taxon>
        <taxon>Pseudomonadota</taxon>
        <taxon>Gammaproteobacteria</taxon>
        <taxon>Pseudomonadales</taxon>
        <taxon>Pseudomonadaceae</taxon>
        <taxon>Pseudomonas</taxon>
    </lineage>
</organism>
<protein>
    <recommendedName>
        <fullName evidence="1">UDP-N-acetylmuramoyl-L-alanyl-D-glutamate--2,6-diaminopimelate ligase</fullName>
        <ecNumber evidence="1">6.3.2.13</ecNumber>
    </recommendedName>
    <alternativeName>
        <fullName evidence="1">Meso-A2pm-adding enzyme</fullName>
    </alternativeName>
    <alternativeName>
        <fullName evidence="1">Meso-diaminopimelate-adding enzyme</fullName>
    </alternativeName>
    <alternativeName>
        <fullName evidence="1">UDP-MurNAc-L-Ala-D-Glu:meso-diaminopimelate ligase</fullName>
    </alternativeName>
    <alternativeName>
        <fullName evidence="1">UDP-MurNAc-tripeptide synthetase</fullName>
    </alternativeName>
    <alternativeName>
        <fullName evidence="1">UDP-N-acetylmuramyl-tripeptide synthetase</fullName>
    </alternativeName>
</protein>
<sequence>MPMSLNQLFPQAERDLLIRELTLDSRGVRPGDLFLAVPGGRQDGRAHIADALAKGAAAVAYEAEGAGELPPSDAPLIAVKGLAAQLSAVAGRFYGEPSRGLDLIGVTGTNGKTSVSQLVAQALDLLGERCGIVGTLGTGFYGALESGRHTTPDPLAVQATLATLKQAGARAVAMEVSSHGLDQGRVAALGFDIAVFTNLSRDHLDYHGSMEAYAAAKAKLFAWPGLRCRVINLDDDFGRRLAGEEQDSELITYSLTDSSAFLYCREARFGDAGIEAALVTPHGEGLLRSPLLGRFNLSNLLAAVGALLGLGYPLGDILRTLPQLQGPVGRMQRLGGGDKPLVVVDYAHTPDALEKVLEALRPHAAARLLCLFGCGGDRDAGKRPLMAAIAERLADEVLVTDDNPRTEASAAIIADIRKGFAAADKVTFLPSRGEAIAHLIASAAVDDVVLLAGKGHEDYQEIDGVRHPFSDIEQAERALAAWEVPHA</sequence>
<reference key="1">
    <citation type="journal article" date="2000" name="Nature">
        <title>Complete genome sequence of Pseudomonas aeruginosa PAO1, an opportunistic pathogen.</title>
        <authorList>
            <person name="Stover C.K."/>
            <person name="Pham X.-Q.T."/>
            <person name="Erwin A.L."/>
            <person name="Mizoguchi S.D."/>
            <person name="Warrener P."/>
            <person name="Hickey M.J."/>
            <person name="Brinkman F.S.L."/>
            <person name="Hufnagle W.O."/>
            <person name="Kowalik D.J."/>
            <person name="Lagrou M."/>
            <person name="Garber R.L."/>
            <person name="Goltry L."/>
            <person name="Tolentino E."/>
            <person name="Westbrock-Wadman S."/>
            <person name="Yuan Y."/>
            <person name="Brody L.L."/>
            <person name="Coulter S.N."/>
            <person name="Folger K.R."/>
            <person name="Kas A."/>
            <person name="Larbig K."/>
            <person name="Lim R.M."/>
            <person name="Smith K.A."/>
            <person name="Spencer D.H."/>
            <person name="Wong G.K.-S."/>
            <person name="Wu Z."/>
            <person name="Paulsen I.T."/>
            <person name="Reizer J."/>
            <person name="Saier M.H. Jr."/>
            <person name="Hancock R.E.W."/>
            <person name="Lory S."/>
            <person name="Olson M.V."/>
        </authorList>
    </citation>
    <scope>NUCLEOTIDE SEQUENCE [LARGE SCALE GENOMIC DNA]</scope>
    <source>
        <strain>ATCC 15692 / DSM 22644 / CIP 104116 / JCM 14847 / LMG 12228 / 1C / PRS 101 / PAO1</strain>
    </source>
</reference>
<reference key="2">
    <citation type="journal article" date="1995" name="Antimicrob. Agents Chemother.">
        <title>Cloning and characterization of the Pseudomonas aeruginosa pbpB gene encoding penicillin-binding protein 3.</title>
        <authorList>
            <person name="Liao X."/>
            <person name="Hancock R.E.W."/>
        </authorList>
    </citation>
    <scope>NUCLEOTIDE SEQUENCE [GENOMIC DNA] OF 1-325</scope>
    <source>
        <strain>ATCC 15692 / DSM 22644 / CIP 104116 / JCM 14847 / LMG 12228 / 1C / PRS 101 / PAO1</strain>
    </source>
</reference>
<accession>Q59650</accession>
<dbReference type="EC" id="6.3.2.13" evidence="1"/>
<dbReference type="EMBL" id="AE004091">
    <property type="protein sequence ID" value="AAG07805.1"/>
    <property type="molecule type" value="Genomic_DNA"/>
</dbReference>
<dbReference type="EMBL" id="X84053">
    <property type="protein sequence ID" value="CAA58873.1"/>
    <property type="molecule type" value="Genomic_DNA"/>
</dbReference>
<dbReference type="PIR" id="B83095">
    <property type="entry name" value="B83095"/>
</dbReference>
<dbReference type="PIR" id="S54873">
    <property type="entry name" value="S54873"/>
</dbReference>
<dbReference type="RefSeq" id="NP_253107.1">
    <property type="nucleotide sequence ID" value="NC_002516.2"/>
</dbReference>
<dbReference type="RefSeq" id="WP_003112751.1">
    <property type="nucleotide sequence ID" value="NZ_QZGE01000004.1"/>
</dbReference>
<dbReference type="SMR" id="Q59650"/>
<dbReference type="FunCoup" id="Q59650">
    <property type="interactions" value="688"/>
</dbReference>
<dbReference type="STRING" id="208964.PA4417"/>
<dbReference type="PaxDb" id="208964-PA4417"/>
<dbReference type="DNASU" id="881246"/>
<dbReference type="GeneID" id="881246"/>
<dbReference type="KEGG" id="pae:PA4417"/>
<dbReference type="PATRIC" id="fig|208964.12.peg.4626"/>
<dbReference type="PseudoCAP" id="PA4417"/>
<dbReference type="HOGENOM" id="CLU_022291_3_2_6"/>
<dbReference type="InParanoid" id="Q59650"/>
<dbReference type="OrthoDB" id="9800958at2"/>
<dbReference type="PhylomeDB" id="Q59650"/>
<dbReference type="BioCyc" id="PAER208964:G1FZ6-4504-MONOMER"/>
<dbReference type="UniPathway" id="UPA00219"/>
<dbReference type="Proteomes" id="UP000002438">
    <property type="component" value="Chromosome"/>
</dbReference>
<dbReference type="GO" id="GO:0005737">
    <property type="term" value="C:cytoplasm"/>
    <property type="evidence" value="ECO:0007669"/>
    <property type="project" value="UniProtKB-SubCell"/>
</dbReference>
<dbReference type="GO" id="GO:0005524">
    <property type="term" value="F:ATP binding"/>
    <property type="evidence" value="ECO:0007669"/>
    <property type="project" value="UniProtKB-UniRule"/>
</dbReference>
<dbReference type="GO" id="GO:0000287">
    <property type="term" value="F:magnesium ion binding"/>
    <property type="evidence" value="ECO:0007669"/>
    <property type="project" value="UniProtKB-UniRule"/>
</dbReference>
<dbReference type="GO" id="GO:0008765">
    <property type="term" value="F:UDP-N-acetylmuramoylalanyl-D-glutamate-2,6-diaminopimelate ligase activity"/>
    <property type="evidence" value="ECO:0007669"/>
    <property type="project" value="UniProtKB-UniRule"/>
</dbReference>
<dbReference type="GO" id="GO:0051301">
    <property type="term" value="P:cell division"/>
    <property type="evidence" value="ECO:0007669"/>
    <property type="project" value="UniProtKB-KW"/>
</dbReference>
<dbReference type="GO" id="GO:0071555">
    <property type="term" value="P:cell wall organization"/>
    <property type="evidence" value="ECO:0007669"/>
    <property type="project" value="UniProtKB-KW"/>
</dbReference>
<dbReference type="GO" id="GO:0009252">
    <property type="term" value="P:peptidoglycan biosynthetic process"/>
    <property type="evidence" value="ECO:0007669"/>
    <property type="project" value="UniProtKB-UniRule"/>
</dbReference>
<dbReference type="GO" id="GO:0008360">
    <property type="term" value="P:regulation of cell shape"/>
    <property type="evidence" value="ECO:0007669"/>
    <property type="project" value="UniProtKB-KW"/>
</dbReference>
<dbReference type="Gene3D" id="3.90.190.20">
    <property type="entry name" value="Mur ligase, C-terminal domain"/>
    <property type="match status" value="1"/>
</dbReference>
<dbReference type="Gene3D" id="3.40.1190.10">
    <property type="entry name" value="Mur-like, catalytic domain"/>
    <property type="match status" value="1"/>
</dbReference>
<dbReference type="Gene3D" id="3.40.1390.10">
    <property type="entry name" value="MurE/MurF, N-terminal domain"/>
    <property type="match status" value="1"/>
</dbReference>
<dbReference type="HAMAP" id="MF_00208">
    <property type="entry name" value="MurE"/>
    <property type="match status" value="1"/>
</dbReference>
<dbReference type="InterPro" id="IPR036565">
    <property type="entry name" value="Mur-like_cat_sf"/>
</dbReference>
<dbReference type="InterPro" id="IPR004101">
    <property type="entry name" value="Mur_ligase_C"/>
</dbReference>
<dbReference type="InterPro" id="IPR036615">
    <property type="entry name" value="Mur_ligase_C_dom_sf"/>
</dbReference>
<dbReference type="InterPro" id="IPR013221">
    <property type="entry name" value="Mur_ligase_cen"/>
</dbReference>
<dbReference type="InterPro" id="IPR000713">
    <property type="entry name" value="Mur_ligase_N"/>
</dbReference>
<dbReference type="InterPro" id="IPR035911">
    <property type="entry name" value="MurE/MurF_N"/>
</dbReference>
<dbReference type="InterPro" id="IPR005761">
    <property type="entry name" value="UDP-N-AcMur-Glu-dNH2Pim_ligase"/>
</dbReference>
<dbReference type="NCBIfam" id="TIGR01085">
    <property type="entry name" value="murE"/>
    <property type="match status" value="1"/>
</dbReference>
<dbReference type="NCBIfam" id="NF001124">
    <property type="entry name" value="PRK00139.1-2"/>
    <property type="match status" value="1"/>
</dbReference>
<dbReference type="NCBIfam" id="NF001126">
    <property type="entry name" value="PRK00139.1-4"/>
    <property type="match status" value="1"/>
</dbReference>
<dbReference type="PANTHER" id="PTHR23135">
    <property type="entry name" value="MUR LIGASE FAMILY MEMBER"/>
    <property type="match status" value="1"/>
</dbReference>
<dbReference type="PANTHER" id="PTHR23135:SF4">
    <property type="entry name" value="UDP-N-ACETYLMURAMOYL-L-ALANYL-D-GLUTAMATE--2,6-DIAMINOPIMELATE LIGASE MURE HOMOLOG, CHLOROPLASTIC"/>
    <property type="match status" value="1"/>
</dbReference>
<dbReference type="Pfam" id="PF01225">
    <property type="entry name" value="Mur_ligase"/>
    <property type="match status" value="1"/>
</dbReference>
<dbReference type="Pfam" id="PF02875">
    <property type="entry name" value="Mur_ligase_C"/>
    <property type="match status" value="1"/>
</dbReference>
<dbReference type="Pfam" id="PF08245">
    <property type="entry name" value="Mur_ligase_M"/>
    <property type="match status" value="1"/>
</dbReference>
<dbReference type="SUPFAM" id="SSF53623">
    <property type="entry name" value="MurD-like peptide ligases, catalytic domain"/>
    <property type="match status" value="1"/>
</dbReference>
<dbReference type="SUPFAM" id="SSF53244">
    <property type="entry name" value="MurD-like peptide ligases, peptide-binding domain"/>
    <property type="match status" value="1"/>
</dbReference>
<dbReference type="SUPFAM" id="SSF63418">
    <property type="entry name" value="MurE/MurF N-terminal domain"/>
    <property type="match status" value="1"/>
</dbReference>
<evidence type="ECO:0000255" key="1">
    <source>
        <dbReference type="HAMAP-Rule" id="MF_00208"/>
    </source>
</evidence>
<evidence type="ECO:0000305" key="2"/>
<gene>
    <name evidence="1" type="primary">murE</name>
    <name type="ordered locus">PA4417</name>
</gene>
<proteinExistence type="inferred from homology"/>
<keyword id="KW-0067">ATP-binding</keyword>
<keyword id="KW-0131">Cell cycle</keyword>
<keyword id="KW-0132">Cell division</keyword>
<keyword id="KW-0133">Cell shape</keyword>
<keyword id="KW-0961">Cell wall biogenesis/degradation</keyword>
<keyword id="KW-0963">Cytoplasm</keyword>
<keyword id="KW-0436">Ligase</keyword>
<keyword id="KW-0460">Magnesium</keyword>
<keyword id="KW-0547">Nucleotide-binding</keyword>
<keyword id="KW-0573">Peptidoglycan synthesis</keyword>
<keyword id="KW-1185">Reference proteome</keyword>
<feature type="chain" id="PRO_0000101926" description="UDP-N-acetylmuramoyl-L-alanyl-D-glutamate--2,6-diaminopimelate ligase">
    <location>
        <begin position="1"/>
        <end position="487"/>
    </location>
</feature>
<feature type="short sequence motif" description="Meso-diaminopimelate recognition motif">
    <location>
        <begin position="402"/>
        <end position="405"/>
    </location>
</feature>
<feature type="binding site" evidence="1">
    <location>
        <position position="23"/>
    </location>
    <ligand>
        <name>UDP-N-acetyl-alpha-D-muramoyl-L-alanyl-D-glutamate</name>
        <dbReference type="ChEBI" id="CHEBI:83900"/>
    </ligand>
</feature>
<feature type="binding site" evidence="1">
    <location>
        <position position="25"/>
    </location>
    <ligand>
        <name>UDP-N-acetyl-alpha-D-muramoyl-L-alanyl-D-glutamate</name>
        <dbReference type="ChEBI" id="CHEBI:83900"/>
    </ligand>
</feature>
<feature type="binding site" evidence="1">
    <location>
        <begin position="108"/>
        <end position="114"/>
    </location>
    <ligand>
        <name>ATP</name>
        <dbReference type="ChEBI" id="CHEBI:30616"/>
    </ligand>
</feature>
<feature type="binding site" evidence="1">
    <location>
        <begin position="150"/>
        <end position="151"/>
    </location>
    <ligand>
        <name>UDP-N-acetyl-alpha-D-muramoyl-L-alanyl-D-glutamate</name>
        <dbReference type="ChEBI" id="CHEBI:83900"/>
    </ligand>
</feature>
<feature type="binding site" evidence="1">
    <location>
        <position position="177"/>
    </location>
    <ligand>
        <name>UDP-N-acetyl-alpha-D-muramoyl-L-alanyl-D-glutamate</name>
        <dbReference type="ChEBI" id="CHEBI:83900"/>
    </ligand>
</feature>
<feature type="binding site" evidence="1">
    <location>
        <position position="183"/>
    </location>
    <ligand>
        <name>UDP-N-acetyl-alpha-D-muramoyl-L-alanyl-D-glutamate</name>
        <dbReference type="ChEBI" id="CHEBI:83900"/>
    </ligand>
</feature>
<feature type="binding site" evidence="1">
    <location>
        <position position="185"/>
    </location>
    <ligand>
        <name>UDP-N-acetyl-alpha-D-muramoyl-L-alanyl-D-glutamate</name>
        <dbReference type="ChEBI" id="CHEBI:83900"/>
    </ligand>
</feature>
<feature type="binding site" evidence="1">
    <location>
        <position position="378"/>
    </location>
    <ligand>
        <name>meso-2,6-diaminopimelate</name>
        <dbReference type="ChEBI" id="CHEBI:57791"/>
    </ligand>
</feature>
<feature type="binding site" evidence="1">
    <location>
        <begin position="402"/>
        <end position="405"/>
    </location>
    <ligand>
        <name>meso-2,6-diaminopimelate</name>
        <dbReference type="ChEBI" id="CHEBI:57791"/>
    </ligand>
</feature>
<feature type="binding site" evidence="1">
    <location>
        <position position="453"/>
    </location>
    <ligand>
        <name>meso-2,6-diaminopimelate</name>
        <dbReference type="ChEBI" id="CHEBI:57791"/>
    </ligand>
</feature>
<feature type="binding site" evidence="1">
    <location>
        <position position="457"/>
    </location>
    <ligand>
        <name>meso-2,6-diaminopimelate</name>
        <dbReference type="ChEBI" id="CHEBI:57791"/>
    </ligand>
</feature>
<feature type="modified residue" description="N6-carboxylysine" evidence="1">
    <location>
        <position position="217"/>
    </location>
</feature>
<feature type="sequence conflict" description="In Ref. 2; CAA58873." evidence="2" ref="2">
    <original>N</original>
    <variation>S</variation>
    <location>
        <position position="6"/>
    </location>
</feature>
<feature type="sequence conflict" description="In Ref. 2; CAA58873." evidence="2" ref="2">
    <original>R</original>
    <variation>H</variation>
    <location>
        <position position="26"/>
    </location>
</feature>
<feature type="sequence conflict" description="In Ref. 2; CAA58873." evidence="2" ref="2">
    <original>G</original>
    <variation>V</variation>
    <location>
        <position position="31"/>
    </location>
</feature>
<feature type="sequence conflict" description="In Ref. 2; CAA58873." evidence="2" ref="2">
    <original>A</original>
    <variation>T</variation>
    <location>
        <position position="36"/>
    </location>
</feature>
<feature type="sequence conflict" description="In Ref. 2; CAA58873." evidence="2" ref="2">
    <original>R</original>
    <variation>H</variation>
    <location>
        <position position="41"/>
    </location>
</feature>
<feature type="sequence conflict" description="In Ref. 2; CAA58873." evidence="2" ref="2">
    <original>A</original>
    <variation>T</variation>
    <location>
        <position position="53"/>
    </location>
</feature>
<feature type="sequence conflict" description="In Ref. 2; CAA58873." evidence="2" ref="2">
    <original>A</original>
    <variation>T</variation>
    <location>
        <position position="57"/>
    </location>
</feature>
<feature type="sequence conflict" description="In Ref. 2; CAA58873." evidence="2" ref="2">
    <original>G</original>
    <variation>D</variation>
    <location>
        <position position="225"/>
    </location>
</feature>
<name>MURE_PSEAE</name>
<comment type="function">
    <text evidence="1">Catalyzes the addition of meso-diaminopimelic acid to the nucleotide precursor UDP-N-acetylmuramoyl-L-alanyl-D-glutamate (UMAG) in the biosynthesis of bacterial cell-wall peptidoglycan.</text>
</comment>
<comment type="catalytic activity">
    <reaction evidence="1">
        <text>UDP-N-acetyl-alpha-D-muramoyl-L-alanyl-D-glutamate + meso-2,6-diaminopimelate + ATP = UDP-N-acetyl-alpha-D-muramoyl-L-alanyl-gamma-D-glutamyl-meso-2,6-diaminopimelate + ADP + phosphate + H(+)</text>
        <dbReference type="Rhea" id="RHEA:23676"/>
        <dbReference type="ChEBI" id="CHEBI:15378"/>
        <dbReference type="ChEBI" id="CHEBI:30616"/>
        <dbReference type="ChEBI" id="CHEBI:43474"/>
        <dbReference type="ChEBI" id="CHEBI:57791"/>
        <dbReference type="ChEBI" id="CHEBI:83900"/>
        <dbReference type="ChEBI" id="CHEBI:83905"/>
        <dbReference type="ChEBI" id="CHEBI:456216"/>
        <dbReference type="EC" id="6.3.2.13"/>
    </reaction>
</comment>
<comment type="cofactor">
    <cofactor evidence="1">
        <name>Mg(2+)</name>
        <dbReference type="ChEBI" id="CHEBI:18420"/>
    </cofactor>
</comment>
<comment type="pathway">
    <text evidence="1">Cell wall biogenesis; peptidoglycan biosynthesis.</text>
</comment>
<comment type="subcellular location">
    <subcellularLocation>
        <location evidence="1">Cytoplasm</location>
    </subcellularLocation>
</comment>
<comment type="PTM">
    <text evidence="1">Carboxylation is probably crucial for Mg(2+) binding and, consequently, for the gamma-phosphate positioning of ATP.</text>
</comment>
<comment type="similarity">
    <text evidence="1">Belongs to the MurCDEF family. MurE subfamily.</text>
</comment>